<reference key="1">
    <citation type="journal article" date="1993" name="Eur. J. Biochem.">
        <title>Interferon-gamma up-regulates a unique set of proteins in human keratinocytes. Molecular cloning and expression of the cDNA encoding the RGD-sequence-containing protein IGUP I-5111.</title>
        <authorList>
            <person name="Honore B."/>
            <person name="Leffers H."/>
            <person name="Madsen P."/>
            <person name="Celis J.E."/>
        </authorList>
    </citation>
    <scope>NUCLEOTIDE SEQUENCE [MRNA] (ISOFORM 1)</scope>
    <source>
        <tissue>Lung fibroblast</tissue>
    </source>
</reference>
<reference key="2">
    <citation type="journal article" date="1994" name="J. Biol. Chem.">
        <title>Molecular cloning and expression of a gamma-interferon-inducible activator of the multicatalytic protease.</title>
        <authorList>
            <person name="Realini C."/>
            <person name="Dubiel W."/>
            <person name="Pratt G."/>
            <person name="Ferrell K."/>
            <person name="Rechsteiner M."/>
        </authorList>
    </citation>
    <scope>NUCLEOTIDE SEQUENCE [GENOMIC DNA] (ISOFORM 1)</scope>
    <source>
        <tissue>Blood</tissue>
    </source>
</reference>
<reference key="3">
    <citation type="journal article" date="1999" name="Immunogenetics">
        <title>Organization of the genes encoding the human proteasome activators PA28alpha and beta.</title>
        <authorList>
            <person name="McCusker D."/>
            <person name="Wilson M."/>
            <person name="Trowsdale J."/>
        </authorList>
    </citation>
    <scope>NUCLEOTIDE SEQUENCE [GENOMIC DNA] (ISOFORM 1)</scope>
</reference>
<reference key="4">
    <citation type="submission" date="2003-05" db="EMBL/GenBank/DDBJ databases">
        <title>Cloning of human full-length CDSs in BD Creator(TM) system donor vector.</title>
        <authorList>
            <person name="Kalnine N."/>
            <person name="Chen X."/>
            <person name="Rolfs A."/>
            <person name="Halleck A."/>
            <person name="Hines L."/>
            <person name="Eisenstein S."/>
            <person name="Koundinya M."/>
            <person name="Raphael J."/>
            <person name="Moreira D."/>
            <person name="Kelley T."/>
            <person name="LaBaer J."/>
            <person name="Lin Y."/>
            <person name="Phelan M."/>
            <person name="Farmer A."/>
        </authorList>
    </citation>
    <scope>NUCLEOTIDE SEQUENCE [LARGE SCALE MRNA] (ISOFORM 1)</scope>
</reference>
<reference key="5">
    <citation type="journal article" date="2004" name="Nat. Genet.">
        <title>Complete sequencing and characterization of 21,243 full-length human cDNAs.</title>
        <authorList>
            <person name="Ota T."/>
            <person name="Suzuki Y."/>
            <person name="Nishikawa T."/>
            <person name="Otsuki T."/>
            <person name="Sugiyama T."/>
            <person name="Irie R."/>
            <person name="Wakamatsu A."/>
            <person name="Hayashi K."/>
            <person name="Sato H."/>
            <person name="Nagai K."/>
            <person name="Kimura K."/>
            <person name="Makita H."/>
            <person name="Sekine M."/>
            <person name="Obayashi M."/>
            <person name="Nishi T."/>
            <person name="Shibahara T."/>
            <person name="Tanaka T."/>
            <person name="Ishii S."/>
            <person name="Yamamoto J."/>
            <person name="Saito K."/>
            <person name="Kawai Y."/>
            <person name="Isono Y."/>
            <person name="Nakamura Y."/>
            <person name="Nagahari K."/>
            <person name="Murakami K."/>
            <person name="Yasuda T."/>
            <person name="Iwayanagi T."/>
            <person name="Wagatsuma M."/>
            <person name="Shiratori A."/>
            <person name="Sudo H."/>
            <person name="Hosoiri T."/>
            <person name="Kaku Y."/>
            <person name="Kodaira H."/>
            <person name="Kondo H."/>
            <person name="Sugawara M."/>
            <person name="Takahashi M."/>
            <person name="Kanda K."/>
            <person name="Yokoi T."/>
            <person name="Furuya T."/>
            <person name="Kikkawa E."/>
            <person name="Omura Y."/>
            <person name="Abe K."/>
            <person name="Kamihara K."/>
            <person name="Katsuta N."/>
            <person name="Sato K."/>
            <person name="Tanikawa M."/>
            <person name="Yamazaki M."/>
            <person name="Ninomiya K."/>
            <person name="Ishibashi T."/>
            <person name="Yamashita H."/>
            <person name="Murakawa K."/>
            <person name="Fujimori K."/>
            <person name="Tanai H."/>
            <person name="Kimata M."/>
            <person name="Watanabe M."/>
            <person name="Hiraoka S."/>
            <person name="Chiba Y."/>
            <person name="Ishida S."/>
            <person name="Ono Y."/>
            <person name="Takiguchi S."/>
            <person name="Watanabe S."/>
            <person name="Yosida M."/>
            <person name="Hotuta T."/>
            <person name="Kusano J."/>
            <person name="Kanehori K."/>
            <person name="Takahashi-Fujii A."/>
            <person name="Hara H."/>
            <person name="Tanase T.-O."/>
            <person name="Nomura Y."/>
            <person name="Togiya S."/>
            <person name="Komai F."/>
            <person name="Hara R."/>
            <person name="Takeuchi K."/>
            <person name="Arita M."/>
            <person name="Imose N."/>
            <person name="Musashino K."/>
            <person name="Yuuki H."/>
            <person name="Oshima A."/>
            <person name="Sasaki N."/>
            <person name="Aotsuka S."/>
            <person name="Yoshikawa Y."/>
            <person name="Matsunawa H."/>
            <person name="Ichihara T."/>
            <person name="Shiohata N."/>
            <person name="Sano S."/>
            <person name="Moriya S."/>
            <person name="Momiyama H."/>
            <person name="Satoh N."/>
            <person name="Takami S."/>
            <person name="Terashima Y."/>
            <person name="Suzuki O."/>
            <person name="Nakagawa S."/>
            <person name="Senoh A."/>
            <person name="Mizoguchi H."/>
            <person name="Goto Y."/>
            <person name="Shimizu F."/>
            <person name="Wakebe H."/>
            <person name="Hishigaki H."/>
            <person name="Watanabe T."/>
            <person name="Sugiyama A."/>
            <person name="Takemoto M."/>
            <person name="Kawakami B."/>
            <person name="Yamazaki M."/>
            <person name="Watanabe K."/>
            <person name="Kumagai A."/>
            <person name="Itakura S."/>
            <person name="Fukuzumi Y."/>
            <person name="Fujimori Y."/>
            <person name="Komiyama M."/>
            <person name="Tashiro H."/>
            <person name="Tanigami A."/>
            <person name="Fujiwara T."/>
            <person name="Ono T."/>
            <person name="Yamada K."/>
            <person name="Fujii Y."/>
            <person name="Ozaki K."/>
            <person name="Hirao M."/>
            <person name="Ohmori Y."/>
            <person name="Kawabata A."/>
            <person name="Hikiji T."/>
            <person name="Kobatake N."/>
            <person name="Inagaki H."/>
            <person name="Ikema Y."/>
            <person name="Okamoto S."/>
            <person name="Okitani R."/>
            <person name="Kawakami T."/>
            <person name="Noguchi S."/>
            <person name="Itoh T."/>
            <person name="Shigeta K."/>
            <person name="Senba T."/>
            <person name="Matsumura K."/>
            <person name="Nakajima Y."/>
            <person name="Mizuno T."/>
            <person name="Morinaga M."/>
            <person name="Sasaki M."/>
            <person name="Togashi T."/>
            <person name="Oyama M."/>
            <person name="Hata H."/>
            <person name="Watanabe M."/>
            <person name="Komatsu T."/>
            <person name="Mizushima-Sugano J."/>
            <person name="Satoh T."/>
            <person name="Shirai Y."/>
            <person name="Takahashi Y."/>
            <person name="Nakagawa K."/>
            <person name="Okumura K."/>
            <person name="Nagase T."/>
            <person name="Nomura N."/>
            <person name="Kikuchi H."/>
            <person name="Masuho Y."/>
            <person name="Yamashita R."/>
            <person name="Nakai K."/>
            <person name="Yada T."/>
            <person name="Nakamura Y."/>
            <person name="Ohara O."/>
            <person name="Isogai T."/>
            <person name="Sugano S."/>
        </authorList>
    </citation>
    <scope>NUCLEOTIDE SEQUENCE [LARGE SCALE MRNA] (ISOFORM 1)</scope>
    <source>
        <tissue>Spleen</tissue>
    </source>
</reference>
<reference key="6">
    <citation type="submission" date="2004-06" db="EMBL/GenBank/DDBJ databases">
        <title>Cloning of human full open reading frames in Gateway(TM) system entry vector (pDONR201).</title>
        <authorList>
            <person name="Ebert L."/>
            <person name="Schick M."/>
            <person name="Neubert P."/>
            <person name="Schatten R."/>
            <person name="Henze S."/>
            <person name="Korn B."/>
        </authorList>
    </citation>
    <scope>NUCLEOTIDE SEQUENCE [LARGE SCALE MRNA] (ISOFORM 1)</scope>
</reference>
<reference key="7">
    <citation type="journal article" date="2003" name="Nature">
        <title>The DNA sequence and analysis of human chromosome 14.</title>
        <authorList>
            <person name="Heilig R."/>
            <person name="Eckenberg R."/>
            <person name="Petit J.-L."/>
            <person name="Fonknechten N."/>
            <person name="Da Silva C."/>
            <person name="Cattolico L."/>
            <person name="Levy M."/>
            <person name="Barbe V."/>
            <person name="De Berardinis V."/>
            <person name="Ureta-Vidal A."/>
            <person name="Pelletier E."/>
            <person name="Vico V."/>
            <person name="Anthouard V."/>
            <person name="Rowen L."/>
            <person name="Madan A."/>
            <person name="Qin S."/>
            <person name="Sun H."/>
            <person name="Du H."/>
            <person name="Pepin K."/>
            <person name="Artiguenave F."/>
            <person name="Robert C."/>
            <person name="Cruaud C."/>
            <person name="Bruels T."/>
            <person name="Jaillon O."/>
            <person name="Friedlander L."/>
            <person name="Samson G."/>
            <person name="Brottier P."/>
            <person name="Cure S."/>
            <person name="Segurens B."/>
            <person name="Aniere F."/>
            <person name="Samain S."/>
            <person name="Crespeau H."/>
            <person name="Abbasi N."/>
            <person name="Aiach N."/>
            <person name="Boscus D."/>
            <person name="Dickhoff R."/>
            <person name="Dors M."/>
            <person name="Dubois I."/>
            <person name="Friedman C."/>
            <person name="Gouyvenoux M."/>
            <person name="James R."/>
            <person name="Madan A."/>
            <person name="Mairey-Estrada B."/>
            <person name="Mangenot S."/>
            <person name="Martins N."/>
            <person name="Menard M."/>
            <person name="Oztas S."/>
            <person name="Ratcliffe A."/>
            <person name="Shaffer T."/>
            <person name="Trask B."/>
            <person name="Vacherie B."/>
            <person name="Bellemere C."/>
            <person name="Belser C."/>
            <person name="Besnard-Gonnet M."/>
            <person name="Bartol-Mavel D."/>
            <person name="Boutard M."/>
            <person name="Briez-Silla S."/>
            <person name="Combette S."/>
            <person name="Dufosse-Laurent V."/>
            <person name="Ferron C."/>
            <person name="Lechaplais C."/>
            <person name="Louesse C."/>
            <person name="Muselet D."/>
            <person name="Magdelenat G."/>
            <person name="Pateau E."/>
            <person name="Petit E."/>
            <person name="Sirvain-Trukniewicz P."/>
            <person name="Trybou A."/>
            <person name="Vega-Czarny N."/>
            <person name="Bataille E."/>
            <person name="Bluet E."/>
            <person name="Bordelais I."/>
            <person name="Dubois M."/>
            <person name="Dumont C."/>
            <person name="Guerin T."/>
            <person name="Haffray S."/>
            <person name="Hammadi R."/>
            <person name="Muanga J."/>
            <person name="Pellouin V."/>
            <person name="Robert D."/>
            <person name="Wunderle E."/>
            <person name="Gauguet G."/>
            <person name="Roy A."/>
            <person name="Sainte-Marthe L."/>
            <person name="Verdier J."/>
            <person name="Verdier-Discala C."/>
            <person name="Hillier L.W."/>
            <person name="Fulton L."/>
            <person name="McPherson J."/>
            <person name="Matsuda F."/>
            <person name="Wilson R."/>
            <person name="Scarpelli C."/>
            <person name="Gyapay G."/>
            <person name="Wincker P."/>
            <person name="Saurin W."/>
            <person name="Quetier F."/>
            <person name="Waterston R."/>
            <person name="Hood L."/>
            <person name="Weissenbach J."/>
        </authorList>
    </citation>
    <scope>NUCLEOTIDE SEQUENCE [LARGE SCALE GENOMIC DNA]</scope>
</reference>
<reference key="8">
    <citation type="submission" date="2005-09" db="EMBL/GenBank/DDBJ databases">
        <authorList>
            <person name="Mural R.J."/>
            <person name="Istrail S."/>
            <person name="Sutton G."/>
            <person name="Florea L."/>
            <person name="Halpern A.L."/>
            <person name="Mobarry C.M."/>
            <person name="Lippert R."/>
            <person name="Walenz B."/>
            <person name="Shatkay H."/>
            <person name="Dew I."/>
            <person name="Miller J.R."/>
            <person name="Flanigan M.J."/>
            <person name="Edwards N.J."/>
            <person name="Bolanos R."/>
            <person name="Fasulo D."/>
            <person name="Halldorsson B.V."/>
            <person name="Hannenhalli S."/>
            <person name="Turner R."/>
            <person name="Yooseph S."/>
            <person name="Lu F."/>
            <person name="Nusskern D.R."/>
            <person name="Shue B.C."/>
            <person name="Zheng X.H."/>
            <person name="Zhong F."/>
            <person name="Delcher A.L."/>
            <person name="Huson D.H."/>
            <person name="Kravitz S.A."/>
            <person name="Mouchard L."/>
            <person name="Reinert K."/>
            <person name="Remington K.A."/>
            <person name="Clark A.G."/>
            <person name="Waterman M.S."/>
            <person name="Eichler E.E."/>
            <person name="Adams M.D."/>
            <person name="Hunkapiller M.W."/>
            <person name="Myers E.W."/>
            <person name="Venter J.C."/>
        </authorList>
    </citation>
    <scope>NUCLEOTIDE SEQUENCE [LARGE SCALE GENOMIC DNA]</scope>
</reference>
<reference key="9">
    <citation type="journal article" date="2004" name="Genome Res.">
        <title>The status, quality, and expansion of the NIH full-length cDNA project: the Mammalian Gene Collection (MGC).</title>
        <authorList>
            <consortium name="The MGC Project Team"/>
        </authorList>
    </citation>
    <scope>NUCLEOTIDE SEQUENCE [LARGE SCALE MRNA]</scope>
    <source>
        <tissue>Muscle</tissue>
    </source>
</reference>
<reference key="10">
    <citation type="journal article" date="1998" name="J. Immunol.">
        <title>Characterization of the mouse PA28 activator complex gene family: complete organizations of the three member genes and a physical map of the approximately 150-kb region containing the alpha- and beta-subunit genes.</title>
        <authorList>
            <person name="Kohda K."/>
            <person name="Ishibashi T."/>
            <person name="Shimbara N."/>
            <person name="Tanaka K."/>
            <person name="Matsuda Y."/>
            <person name="Kasahara M."/>
        </authorList>
    </citation>
    <scope>NUCLEOTIDE SEQUENCE [GENOMIC DNA] OF 43-118</scope>
</reference>
<reference key="11">
    <citation type="journal article" date="1992" name="Electrophoresis">
        <title>Microsequences of 145 proteins recorded in the two-dimensional gel protein database of normal human epidermal keratinocytes.</title>
        <authorList>
            <person name="Rasmussen H.H."/>
            <person name="van Damme J."/>
            <person name="Puype M."/>
            <person name="Gesser B."/>
            <person name="Celis J.E."/>
            <person name="Vandekerckhove J."/>
        </authorList>
    </citation>
    <scope>PROTEIN SEQUENCE OF 25-35; 191-197 AND 199-209</scope>
    <source>
        <tissue>Keratinocyte</tissue>
    </source>
</reference>
<reference key="12">
    <citation type="journal article" date="1997" name="Protein Sci.">
        <title>The proteasome 11S regulator subunit REG alpha (PA28 alpha) is a heptamer.</title>
        <authorList>
            <person name="Johnston S.C."/>
            <person name="Whitby F.G."/>
            <person name="Realini C."/>
            <person name="Rechsteiner M."/>
            <person name="Hill C.P."/>
        </authorList>
    </citation>
    <scope>SUBUNIT</scope>
</reference>
<reference key="13">
    <citation type="journal article" date="2007" name="Biochemistry">
        <title>Mass spectrometric characterization of the affinity-purified human 26S proteasome complex.</title>
        <authorList>
            <person name="Wang X."/>
            <person name="Chen C.-F."/>
            <person name="Baker P.R."/>
            <person name="Chen P.-L."/>
            <person name="Kaiser P."/>
            <person name="Huang L."/>
        </authorList>
    </citation>
    <scope>IDENTIFICATION BY MASS SPECTROMETRY [LARGE SCALE ANALYSIS]</scope>
    <source>
        <tissue>Embryonic kidney</tissue>
    </source>
</reference>
<reference key="14">
    <citation type="journal article" date="2011" name="BMC Syst. Biol.">
        <title>Initial characterization of the human central proteome.</title>
        <authorList>
            <person name="Burkard T.R."/>
            <person name="Planyavsky M."/>
            <person name="Kaupe I."/>
            <person name="Breitwieser F.P."/>
            <person name="Buerckstuemmer T."/>
            <person name="Bennett K.L."/>
            <person name="Superti-Furga G."/>
            <person name="Colinge J."/>
        </authorList>
    </citation>
    <scope>IDENTIFICATION BY MASS SPECTROMETRY [LARGE SCALE ANALYSIS]</scope>
</reference>
<reference key="15">
    <citation type="journal article" date="2014" name="J. Proteomics">
        <title>An enzyme assisted RP-RPLC approach for in-depth analysis of human liver phosphoproteome.</title>
        <authorList>
            <person name="Bian Y."/>
            <person name="Song C."/>
            <person name="Cheng K."/>
            <person name="Dong M."/>
            <person name="Wang F."/>
            <person name="Huang J."/>
            <person name="Sun D."/>
            <person name="Wang L."/>
            <person name="Ye M."/>
            <person name="Zou H."/>
        </authorList>
    </citation>
    <scope>IDENTIFICATION BY MASS SPECTROMETRY [LARGE SCALE ANALYSIS]</scope>
    <source>
        <tissue>Liver</tissue>
    </source>
</reference>
<reference key="16">
    <citation type="journal article" date="2015" name="Proteomics">
        <title>N-terminome analysis of the human mitochondrial proteome.</title>
        <authorList>
            <person name="Vaca Jacome A.S."/>
            <person name="Rabilloud T."/>
            <person name="Schaeffer-Reiss C."/>
            <person name="Rompais M."/>
            <person name="Ayoub D."/>
            <person name="Lane L."/>
            <person name="Bairoch A."/>
            <person name="Van Dorsselaer A."/>
            <person name="Carapito C."/>
        </authorList>
    </citation>
    <scope>IDENTIFICATION BY MASS SPECTROMETRY [LARGE SCALE ANALYSIS]</scope>
</reference>
<reference key="17">
    <citation type="journal article" date="1997" name="Nature">
        <title>Structure of the proteasome activator REGalpha (PA28alpha).</title>
        <authorList>
            <person name="Knowlton J.R."/>
            <person name="Johnston S.C."/>
            <person name="Whitby F.G."/>
            <person name="Realini C."/>
            <person name="Zhang Z."/>
            <person name="Rechsteiner M."/>
            <person name="Hill C.P."/>
        </authorList>
    </citation>
    <scope>X-RAY CRYSTALLOGRAPHY (2.8 ANGSTROMS)</scope>
</reference>
<accession>Q06323</accession>
<accession>A6NJG9</accession>
<accession>H0YNE3</accession>
<accession>Q6IBM2</accession>
<accession>Q9UEF4</accession>
<keyword id="KW-0002">3D-structure</keyword>
<keyword id="KW-0025">Alternative splicing</keyword>
<keyword id="KW-0903">Direct protein sequencing</keyword>
<keyword id="KW-0647">Proteasome</keyword>
<keyword id="KW-1267">Proteomics identification</keyword>
<keyword id="KW-1185">Reference proteome</keyword>
<feature type="chain" id="PRO_0000161779" description="Proteasome activator complex subunit 1">
    <location>
        <begin position="1"/>
        <end position="249"/>
    </location>
</feature>
<feature type="region of interest" description="Disordered" evidence="1">
    <location>
        <begin position="60"/>
        <end position="102"/>
    </location>
</feature>
<feature type="compositionally biased region" description="Basic and acidic residues" evidence="1">
    <location>
        <begin position="68"/>
        <end position="98"/>
    </location>
</feature>
<feature type="splice variant" id="VSP_046880" description="In isoform 2." evidence="3">
    <original>AVLYDIILKNFEKLKKPRGETKGMIY</original>
    <variation>VRRQGQGRGGQRQLSQATHSLTLQARG</variation>
    <location>
        <begin position="224"/>
        <end position="249"/>
    </location>
</feature>
<feature type="splice variant" id="VSP_055166" description="In isoform 3." evidence="3">
    <original>AVLYDIILKN</original>
    <variation>VRRLCYMTSS</variation>
    <location>
        <begin position="224"/>
        <end position="233"/>
    </location>
</feature>
<feature type="splice variant" id="VSP_055167" description="In isoform 3." evidence="3">
    <location>
        <begin position="234"/>
        <end position="249"/>
    </location>
</feature>
<feature type="sequence variant" id="VAR_011993" description="In dbSNP:rs1803830.">
    <original>S</original>
    <variation>N</variation>
    <location>
        <position position="55"/>
    </location>
</feature>
<feature type="sequence variant" id="VAR_011994" description="In dbSNP:rs14930.">
    <original>T</original>
    <variation>K</variation>
    <location>
        <position position="244"/>
    </location>
</feature>
<feature type="helix" evidence="4">
    <location>
        <begin position="8"/>
        <end position="30"/>
    </location>
</feature>
<feature type="helix" evidence="4">
    <location>
        <begin position="32"/>
        <end position="45"/>
    </location>
</feature>
<feature type="helix" evidence="4">
    <location>
        <begin position="47"/>
        <end position="49"/>
    </location>
</feature>
<feature type="turn" evidence="5">
    <location>
        <begin position="54"/>
        <end position="57"/>
    </location>
</feature>
<feature type="helix" evidence="4">
    <location>
        <begin position="108"/>
        <end position="137"/>
    </location>
</feature>
<feature type="helix" evidence="4">
    <location>
        <begin position="148"/>
        <end position="190"/>
    </location>
</feature>
<feature type="helix" evidence="4">
    <location>
        <begin position="196"/>
        <end position="232"/>
    </location>
</feature>
<feature type="helix" evidence="4">
    <location>
        <begin position="234"/>
        <end position="238"/>
    </location>
</feature>
<feature type="strand" evidence="5">
    <location>
        <begin position="239"/>
        <end position="241"/>
    </location>
</feature>
<protein>
    <recommendedName>
        <fullName>Proteasome activator complex subunit 1</fullName>
    </recommendedName>
    <alternativeName>
        <fullName>11S regulator complex subunit alpha</fullName>
        <shortName>REG-alpha</shortName>
    </alternativeName>
    <alternativeName>
        <fullName>Activator of multicatalytic protease subunit 1</fullName>
    </alternativeName>
    <alternativeName>
        <fullName>Interferon gamma up-regulated I-5111 protein</fullName>
        <shortName>IGUP I-5111</shortName>
    </alternativeName>
    <alternativeName>
        <fullName>Proteasome activator 28 subunit alpha</fullName>
        <shortName>PA28a</shortName>
        <shortName>PA28alpha</shortName>
    </alternativeName>
</protein>
<organism>
    <name type="scientific">Homo sapiens</name>
    <name type="common">Human</name>
    <dbReference type="NCBI Taxonomy" id="9606"/>
    <lineage>
        <taxon>Eukaryota</taxon>
        <taxon>Metazoa</taxon>
        <taxon>Chordata</taxon>
        <taxon>Craniata</taxon>
        <taxon>Vertebrata</taxon>
        <taxon>Euteleostomi</taxon>
        <taxon>Mammalia</taxon>
        <taxon>Eutheria</taxon>
        <taxon>Euarchontoglires</taxon>
        <taxon>Primates</taxon>
        <taxon>Haplorrhini</taxon>
        <taxon>Catarrhini</taxon>
        <taxon>Hominidae</taxon>
        <taxon>Homo</taxon>
    </lineage>
</organism>
<comment type="function">
    <text>Implicated in immunoproteasome assembly and required for efficient antigen processing. The PA28 activator complex enhances the generation of class I binding peptides by altering the cleavage pattern of the proteasome.</text>
</comment>
<comment type="subunit">
    <text evidence="2">Heterodimer of PSME1 and PSME2, which forms a hexameric ring. PSME1 can form homoheptamers.</text>
</comment>
<comment type="interaction">
    <interactant intactId="EBI-712149">
        <id>Q06323</id>
    </interactant>
    <interactant intactId="EBI-348399">
        <id>P22607</id>
        <label>FGFR3</label>
    </interactant>
    <organismsDiffer>false</organismsDiffer>
    <experiments>3</experiments>
</comment>
<comment type="interaction">
    <interactant intactId="EBI-712149">
        <id>Q06323</id>
    </interactant>
    <interactant intactId="EBI-8285963">
        <id>Q14957</id>
        <label>GRIN2C</label>
    </interactant>
    <organismsDiffer>false</organismsDiffer>
    <experiments>3</experiments>
</comment>
<comment type="interaction">
    <interactant intactId="EBI-712149">
        <id>Q06323</id>
    </interactant>
    <interactant intactId="EBI-351506">
        <id>P06396</id>
        <label>GSN</label>
    </interactant>
    <organismsDiffer>false</organismsDiffer>
    <experiments>3</experiments>
</comment>
<comment type="interaction">
    <interactant intactId="EBI-712149">
        <id>Q06323</id>
    </interactant>
    <interactant intactId="EBI-1055254">
        <id>Q8WXH2</id>
        <label>JPH3</label>
    </interactant>
    <organismsDiffer>false</organismsDiffer>
    <experiments>3</experiments>
</comment>
<comment type="interaction">
    <interactant intactId="EBI-712149">
        <id>Q06323</id>
    </interactant>
    <interactant intactId="EBI-741630">
        <id>Q9UL46</id>
        <label>PSME2</label>
    </interactant>
    <organismsDiffer>false</organismsDiffer>
    <experiments>10</experiments>
</comment>
<comment type="interaction">
    <interactant intactId="EBI-712149">
        <id>Q06323</id>
    </interactant>
    <interactant intactId="EBI-2559665">
        <id>Q5JTV8</id>
        <label>TOR1AIP1</label>
    </interactant>
    <organismsDiffer>false</organismsDiffer>
    <experiments>3</experiments>
</comment>
<comment type="interaction">
    <interactant intactId="EBI-712149">
        <id>Q06323</id>
    </interactant>
    <interactant intactId="EBI-741480">
        <id>Q9UMX0</id>
        <label>UBQLN1</label>
    </interactant>
    <organismsDiffer>false</organismsDiffer>
    <experiments>3</experiments>
</comment>
<comment type="interaction">
    <interactant intactId="EBI-712149">
        <id>Q06323</id>
    </interactant>
    <interactant intactId="EBI-25900580">
        <id>Q9Y649</id>
    </interactant>
    <organismsDiffer>false</organismsDiffer>
    <experiments>3</experiments>
</comment>
<comment type="alternative products">
    <event type="alternative splicing"/>
    <isoform>
        <id>Q06323-1</id>
        <name>1</name>
        <sequence type="displayed"/>
    </isoform>
    <isoform>
        <id>Q06323-2</id>
        <name>2</name>
        <sequence type="described" ref="VSP_046880"/>
    </isoform>
    <isoform>
        <id>Q06323-3</id>
        <name>3</name>
        <sequence type="described" ref="VSP_055166 VSP_055167"/>
    </isoform>
</comment>
<comment type="induction">
    <text>By IFNG/IFN-gamma.</text>
</comment>
<comment type="similarity">
    <text evidence="3">Belongs to the PA28 family.</text>
</comment>
<dbReference type="EMBL" id="L07633">
    <property type="protein sequence ID" value="AAA16521.1"/>
    <property type="molecule type" value="mRNA"/>
</dbReference>
<dbReference type="EMBL" id="U10360">
    <property type="protein sequence ID" value="AAA53230.1"/>
    <property type="molecule type" value="Genomic_DNA"/>
</dbReference>
<dbReference type="EMBL" id="AF078829">
    <property type="protein sequence ID" value="AAF02217.1"/>
    <property type="molecule type" value="Genomic_DNA"/>
</dbReference>
<dbReference type="EMBL" id="BT019337">
    <property type="protein sequence ID" value="AAV38144.1"/>
    <property type="molecule type" value="mRNA"/>
</dbReference>
<dbReference type="EMBL" id="AK312211">
    <property type="protein sequence ID" value="BAG35144.1"/>
    <property type="molecule type" value="mRNA"/>
</dbReference>
<dbReference type="EMBL" id="CR456780">
    <property type="protein sequence ID" value="CAG33061.1"/>
    <property type="molecule type" value="mRNA"/>
</dbReference>
<dbReference type="EMBL" id="AL136295">
    <property type="status" value="NOT_ANNOTATED_CDS"/>
    <property type="molecule type" value="Genomic_DNA"/>
</dbReference>
<dbReference type="EMBL" id="CH471078">
    <property type="protein sequence ID" value="EAW66105.1"/>
    <property type="molecule type" value="Genomic_DNA"/>
</dbReference>
<dbReference type="EMBL" id="BC000352">
    <property type="protein sequence ID" value="AAH00352.1"/>
    <property type="molecule type" value="mRNA"/>
</dbReference>
<dbReference type="EMBL" id="BC007503">
    <property type="protein sequence ID" value="AAH07503.1"/>
    <property type="molecule type" value="mRNA"/>
</dbReference>
<dbReference type="EMBL" id="AB007137">
    <property type="protein sequence ID" value="BAA28836.1"/>
    <property type="molecule type" value="Genomic_DNA"/>
</dbReference>
<dbReference type="CCDS" id="CCDS41930.1">
    <molecule id="Q06323-2"/>
</dbReference>
<dbReference type="CCDS" id="CCDS61415.1">
    <molecule id="Q06323-3"/>
</dbReference>
<dbReference type="CCDS" id="CCDS9612.1">
    <molecule id="Q06323-1"/>
</dbReference>
<dbReference type="PIR" id="A54859">
    <property type="entry name" value="A54859"/>
</dbReference>
<dbReference type="RefSeq" id="NP_001268457.1">
    <molecule id="Q06323-3"/>
    <property type="nucleotide sequence ID" value="NM_001281528.2"/>
</dbReference>
<dbReference type="RefSeq" id="NP_006254.1">
    <molecule id="Q06323-1"/>
    <property type="nucleotide sequence ID" value="NM_006263.4"/>
</dbReference>
<dbReference type="RefSeq" id="NP_788955.1">
    <molecule id="Q06323-2"/>
    <property type="nucleotide sequence ID" value="NM_176783.3"/>
</dbReference>
<dbReference type="PDB" id="1AVO">
    <property type="method" value="X-ray"/>
    <property type="resolution" value="2.80 A"/>
    <property type="chains" value="A/C/E/G/I/K/M=4-63, B/D/F/H/J/L/N=104-242"/>
</dbReference>
<dbReference type="PDB" id="7DR6">
    <property type="method" value="EM"/>
    <property type="resolution" value="4.10 A"/>
    <property type="chains" value="B/C/E/G=1-249"/>
</dbReference>
<dbReference type="PDB" id="7DRW">
    <property type="method" value="EM"/>
    <property type="resolution" value="4.20 A"/>
    <property type="chains" value="I/J/L/N/Q/a/e/i=1-249"/>
</dbReference>
<dbReference type="PDB" id="7NAO">
    <property type="method" value="EM"/>
    <property type="resolution" value="2.90 A"/>
    <property type="chains" value="c/e/g=1-249"/>
</dbReference>
<dbReference type="PDB" id="7NAP">
    <property type="method" value="EM"/>
    <property type="resolution" value="3.20 A"/>
    <property type="chains" value="c/e/g/j/l/n=1-249"/>
</dbReference>
<dbReference type="PDB" id="8CXB">
    <property type="method" value="EM"/>
    <property type="resolution" value="2.90 A"/>
    <property type="chains" value="d/f/h/i=1-249"/>
</dbReference>
<dbReference type="PDBsum" id="1AVO"/>
<dbReference type="PDBsum" id="7DR6"/>
<dbReference type="PDBsum" id="7DRW"/>
<dbReference type="PDBsum" id="7NAO"/>
<dbReference type="PDBsum" id="7NAP"/>
<dbReference type="PDBsum" id="8CXB"/>
<dbReference type="EMDB" id="EMD-24276"/>
<dbReference type="EMDB" id="EMD-24277"/>
<dbReference type="EMDB" id="EMD-30824"/>
<dbReference type="EMDB" id="EMD-30828"/>
<dbReference type="SMR" id="Q06323"/>
<dbReference type="BioGRID" id="111692">
    <property type="interactions" value="275"/>
</dbReference>
<dbReference type="ComplexPortal" id="CPX-8842">
    <property type="entry name" value="PA28-alphabeta double-capped 20S proteasome complex"/>
</dbReference>
<dbReference type="ComplexPortal" id="CPX-9002">
    <property type="entry name" value="PA28-alphabeta single-capped 20S proteasome complex"/>
</dbReference>
<dbReference type="ComplexPortal" id="CPX-9082">
    <property type="entry name" value="19S-20S-PA28-alphabeta hybrid proteasome complex"/>
</dbReference>
<dbReference type="CORUM" id="Q06323"/>
<dbReference type="FunCoup" id="Q06323">
    <property type="interactions" value="466"/>
</dbReference>
<dbReference type="IntAct" id="Q06323">
    <property type="interactions" value="134"/>
</dbReference>
<dbReference type="MINT" id="Q06323"/>
<dbReference type="STRING" id="9606.ENSP00000372155"/>
<dbReference type="ChEMBL" id="CHEMBL4295804"/>
<dbReference type="DrugBank" id="DB09130">
    <property type="generic name" value="Copper"/>
</dbReference>
<dbReference type="GlyGen" id="Q06323">
    <property type="glycosylation" value="1 site, 1 O-linked glycan (1 site)"/>
</dbReference>
<dbReference type="iPTMnet" id="Q06323"/>
<dbReference type="MetOSite" id="Q06323"/>
<dbReference type="PhosphoSitePlus" id="Q06323"/>
<dbReference type="SwissPalm" id="Q06323"/>
<dbReference type="BioMuta" id="PSME1"/>
<dbReference type="DMDM" id="1170519"/>
<dbReference type="OGP" id="Q06323"/>
<dbReference type="CPTAC" id="CPTAC-121"/>
<dbReference type="CPTAC" id="CPTAC-122"/>
<dbReference type="jPOST" id="Q06323"/>
<dbReference type="MassIVE" id="Q06323"/>
<dbReference type="PaxDb" id="9606-ENSP00000372155"/>
<dbReference type="PeptideAtlas" id="Q06323"/>
<dbReference type="PRIDE" id="Q06323"/>
<dbReference type="ProteomicsDB" id="1336"/>
<dbReference type="ProteomicsDB" id="40533"/>
<dbReference type="ProteomicsDB" id="58431">
    <molecule id="Q06323-1"/>
</dbReference>
<dbReference type="Pumba" id="Q06323"/>
<dbReference type="TopDownProteomics" id="Q06323-1">
    <molecule id="Q06323-1"/>
</dbReference>
<dbReference type="Antibodypedia" id="1712">
    <property type="antibodies" value="330 antibodies from 37 providers"/>
</dbReference>
<dbReference type="DNASU" id="5720"/>
<dbReference type="Ensembl" id="ENST00000206451.11">
    <molecule id="Q06323-1"/>
    <property type="protein sequence ID" value="ENSP00000206451.6"/>
    <property type="gene ID" value="ENSG00000092010.15"/>
</dbReference>
<dbReference type="Ensembl" id="ENST00000382708.7">
    <molecule id="Q06323-2"/>
    <property type="protein sequence ID" value="ENSP00000372155.3"/>
    <property type="gene ID" value="ENSG00000092010.15"/>
</dbReference>
<dbReference type="Ensembl" id="ENST00000561435.5">
    <molecule id="Q06323-3"/>
    <property type="protein sequence ID" value="ENSP00000453976.1"/>
    <property type="gene ID" value="ENSG00000092010.15"/>
</dbReference>
<dbReference type="Ensembl" id="ENST00000643169.1">
    <molecule id="Q06323-3"/>
    <property type="protein sequence ID" value="ENSP00000493882.1"/>
    <property type="gene ID" value="ENSG00000284916.2"/>
</dbReference>
<dbReference type="Ensembl" id="ENST00000645537.2">
    <molecule id="Q06323-1"/>
    <property type="protein sequence ID" value="ENSP00000495095.1"/>
    <property type="gene ID" value="ENSG00000284916.2"/>
</dbReference>
<dbReference type="Ensembl" id="ENST00000646132.1">
    <molecule id="Q06323-2"/>
    <property type="protein sequence ID" value="ENSP00000496083.1"/>
    <property type="gene ID" value="ENSG00000284916.2"/>
</dbReference>
<dbReference type="GeneID" id="5720"/>
<dbReference type="KEGG" id="hsa:5720"/>
<dbReference type="MANE-Select" id="ENST00000206451.11">
    <property type="protein sequence ID" value="ENSP00000206451.6"/>
    <property type="RefSeq nucleotide sequence ID" value="NM_006263.4"/>
    <property type="RefSeq protein sequence ID" value="NP_006254.1"/>
</dbReference>
<dbReference type="UCSC" id="uc001wmg.4">
    <molecule id="Q06323-1"/>
    <property type="organism name" value="human"/>
</dbReference>
<dbReference type="AGR" id="HGNC:9568"/>
<dbReference type="CTD" id="5720"/>
<dbReference type="DisGeNET" id="5720"/>
<dbReference type="GeneCards" id="PSME1"/>
<dbReference type="HGNC" id="HGNC:9568">
    <property type="gene designation" value="PSME1"/>
</dbReference>
<dbReference type="HPA" id="ENSG00000092010">
    <property type="expression patterns" value="Low tissue specificity"/>
</dbReference>
<dbReference type="MIM" id="600654">
    <property type="type" value="gene"/>
</dbReference>
<dbReference type="neXtProt" id="NX_Q06323"/>
<dbReference type="OpenTargets" id="ENSG00000092010"/>
<dbReference type="PharmGKB" id="PA33914"/>
<dbReference type="VEuPathDB" id="HostDB:ENSG00000092010"/>
<dbReference type="eggNOG" id="KOG4470">
    <property type="taxonomic scope" value="Eukaryota"/>
</dbReference>
<dbReference type="GeneTree" id="ENSGT00950000183098"/>
<dbReference type="HOGENOM" id="CLU_062515_0_0_1"/>
<dbReference type="InParanoid" id="Q06323"/>
<dbReference type="OMA" id="CGPIYSN"/>
<dbReference type="OrthoDB" id="6591885at2759"/>
<dbReference type="PAN-GO" id="Q06323">
    <property type="GO annotations" value="6 GO annotations based on evolutionary models"/>
</dbReference>
<dbReference type="PhylomeDB" id="Q06323"/>
<dbReference type="TreeFam" id="TF106236"/>
<dbReference type="PathwayCommons" id="Q06323"/>
<dbReference type="Reactome" id="R-HSA-9907900">
    <property type="pathway name" value="Proteasome assembly"/>
</dbReference>
<dbReference type="SignaLink" id="Q06323"/>
<dbReference type="SIGNOR" id="Q06323"/>
<dbReference type="BioGRID-ORCS" id="5720">
    <property type="hits" value="316 hits in 1169 CRISPR screens"/>
</dbReference>
<dbReference type="CD-CODE" id="8C2F96ED">
    <property type="entry name" value="Centrosome"/>
</dbReference>
<dbReference type="ChiTaRS" id="PSME1">
    <property type="organism name" value="human"/>
</dbReference>
<dbReference type="EvolutionaryTrace" id="Q06323"/>
<dbReference type="GeneWiki" id="PSME1"/>
<dbReference type="GenomeRNAi" id="5720"/>
<dbReference type="Pharos" id="Q06323">
    <property type="development level" value="Tbio"/>
</dbReference>
<dbReference type="PRO" id="PR:Q06323"/>
<dbReference type="Proteomes" id="UP000005640">
    <property type="component" value="Chromosome 14"/>
</dbReference>
<dbReference type="RNAct" id="Q06323">
    <property type="molecule type" value="protein"/>
</dbReference>
<dbReference type="Bgee" id="ENSG00000092010">
    <property type="expression patterns" value="Expressed in granulocyte and 101 other cell types or tissues"/>
</dbReference>
<dbReference type="ExpressionAtlas" id="Q06323">
    <property type="expression patterns" value="baseline and differential"/>
</dbReference>
<dbReference type="GO" id="GO:0005737">
    <property type="term" value="C:cytoplasm"/>
    <property type="evidence" value="ECO:0000318"/>
    <property type="project" value="GO_Central"/>
</dbReference>
<dbReference type="GO" id="GO:0005829">
    <property type="term" value="C:cytosol"/>
    <property type="evidence" value="ECO:0000304"/>
    <property type="project" value="Reactome"/>
</dbReference>
<dbReference type="GO" id="GO:0070062">
    <property type="term" value="C:extracellular exosome"/>
    <property type="evidence" value="ECO:0007005"/>
    <property type="project" value="UniProtKB"/>
</dbReference>
<dbReference type="GO" id="GO:0005654">
    <property type="term" value="C:nucleoplasm"/>
    <property type="evidence" value="ECO:0000318"/>
    <property type="project" value="GO_Central"/>
</dbReference>
<dbReference type="GO" id="GO:0008537">
    <property type="term" value="C:proteasome activator complex"/>
    <property type="evidence" value="ECO:0007669"/>
    <property type="project" value="InterPro"/>
</dbReference>
<dbReference type="GO" id="GO:0000502">
    <property type="term" value="C:proteasome complex"/>
    <property type="evidence" value="ECO:0000304"/>
    <property type="project" value="ProtInc"/>
</dbReference>
<dbReference type="GO" id="GO:0061133">
    <property type="term" value="F:endopeptidase activator activity"/>
    <property type="evidence" value="ECO:0000318"/>
    <property type="project" value="GO_Central"/>
</dbReference>
<dbReference type="GO" id="GO:0019884">
    <property type="term" value="P:antigen processing and presentation of exogenous antigen"/>
    <property type="evidence" value="ECO:0007669"/>
    <property type="project" value="Ensembl"/>
</dbReference>
<dbReference type="GO" id="GO:2000045">
    <property type="term" value="P:regulation of G1/S transition of mitotic cell cycle"/>
    <property type="evidence" value="ECO:0000318"/>
    <property type="project" value="GO_Central"/>
</dbReference>
<dbReference type="GO" id="GO:0061136">
    <property type="term" value="P:regulation of proteasomal protein catabolic process"/>
    <property type="evidence" value="ECO:0000318"/>
    <property type="project" value="GO_Central"/>
</dbReference>
<dbReference type="FunFam" id="1.20.120.180:FF:000002">
    <property type="entry name" value="Proteasome activator complex subunit 1"/>
    <property type="match status" value="1"/>
</dbReference>
<dbReference type="FunFam" id="1.20.5.120:FF:000001">
    <property type="entry name" value="Proteasome activator complex subunit 3"/>
    <property type="match status" value="1"/>
</dbReference>
<dbReference type="Gene3D" id="1.20.120.180">
    <property type="entry name" value="Proteasome activator pa28, C-terminal domain"/>
    <property type="match status" value="1"/>
</dbReference>
<dbReference type="Gene3D" id="1.20.5.120">
    <property type="entry name" value="Proteasome activator pa28, N-terminal domain"/>
    <property type="match status" value="1"/>
</dbReference>
<dbReference type="InterPro" id="IPR003186">
    <property type="entry name" value="PA28_C"/>
</dbReference>
<dbReference type="InterPro" id="IPR036997">
    <property type="entry name" value="PA28_C_sf"/>
</dbReference>
<dbReference type="InterPro" id="IPR036996">
    <property type="entry name" value="PA28_N_sf"/>
</dbReference>
<dbReference type="InterPro" id="IPR009077">
    <property type="entry name" value="Proteasome_activ_PA28"/>
</dbReference>
<dbReference type="InterPro" id="IPR003185">
    <property type="entry name" value="Proteasome_activ_PA28_N"/>
</dbReference>
<dbReference type="InterPro" id="IPR036252">
    <property type="entry name" value="Proteasome_activ_sf"/>
</dbReference>
<dbReference type="PANTHER" id="PTHR10660:SF5">
    <property type="entry name" value="PROTEASOME ACTIVATOR COMPLEX SUBUNIT 1"/>
    <property type="match status" value="1"/>
</dbReference>
<dbReference type="PANTHER" id="PTHR10660">
    <property type="entry name" value="PROTEASOME REGULATOR PA28"/>
    <property type="match status" value="1"/>
</dbReference>
<dbReference type="Pfam" id="PF02252">
    <property type="entry name" value="PA28_C"/>
    <property type="match status" value="1"/>
</dbReference>
<dbReference type="Pfam" id="PF02251">
    <property type="entry name" value="PA28_N"/>
    <property type="match status" value="1"/>
</dbReference>
<dbReference type="SUPFAM" id="SSF47216">
    <property type="entry name" value="Proteasome activator"/>
    <property type="match status" value="1"/>
</dbReference>
<sequence length="249" mass="28723">MAMLRVQPEAQAKVDVFREDLCTKTENLLGSYFPKKISELDAFLKEPALNEANLSNLKAPLDIPVPDPVKEKEKEERKKQQEKEDKDEKKKGEDEDKGPPCGPVNCNEKIVVLLQRLKPEIKDVIEQLNLVTTWLQLQIPRIEDGNNFGVAVQEKVFELMTSLHTKLEGFHTQISKYFSERGDAVTKAAKQPHVGDYRQLVHELDEAEYRDIRLMVMEIRNAYAVLYDIILKNFEKLKKPRGETKGMIY</sequence>
<proteinExistence type="evidence at protein level"/>
<evidence type="ECO:0000256" key="1">
    <source>
        <dbReference type="SAM" id="MobiDB-lite"/>
    </source>
</evidence>
<evidence type="ECO:0000269" key="2">
    <source>
    </source>
</evidence>
<evidence type="ECO:0000305" key="3"/>
<evidence type="ECO:0007829" key="4">
    <source>
        <dbReference type="PDB" id="1AVO"/>
    </source>
</evidence>
<evidence type="ECO:0007829" key="5">
    <source>
        <dbReference type="PDB" id="7NAO"/>
    </source>
</evidence>
<gene>
    <name type="primary">PSME1</name>
    <name type="synonym">IFI5111</name>
</gene>
<name>PSME1_HUMAN</name>